<reference key="1">
    <citation type="journal article" date="2008" name="PLoS ONE">
        <title>A recalibrated molecular clock and independent origins for the cholera pandemic clones.</title>
        <authorList>
            <person name="Feng L."/>
            <person name="Reeves P.R."/>
            <person name="Lan R."/>
            <person name="Ren Y."/>
            <person name="Gao C."/>
            <person name="Zhou Z."/>
            <person name="Ren Y."/>
            <person name="Cheng J."/>
            <person name="Wang W."/>
            <person name="Wang J."/>
            <person name="Qian W."/>
            <person name="Li D."/>
            <person name="Wang L."/>
        </authorList>
    </citation>
    <scope>NUCLEOTIDE SEQUENCE [LARGE SCALE GENOMIC DNA]</scope>
    <source>
        <strain>M66-2</strain>
    </source>
</reference>
<sequence>MSNEEIKNKDEQLQQDAVETEAEVVGTDADIDWNQAADEIDEKEAKIAQLEAALLVSEERVKEQQDSVLRARAEVENMRRRSEQEVDKARKFALSRFAEELLPVIDNLERAIQAADGEVEAIKPLLEGVELTHKTFVDTIAKFGLKEINPHGEVFNPEFHQAMSIQESAEHEPNTVMFVMQKGYELNGRVLRPAMVMVSK</sequence>
<feature type="chain" id="PRO_1000164228" description="Protein GrpE">
    <location>
        <begin position="1"/>
        <end position="200"/>
    </location>
</feature>
<feature type="region of interest" description="Disordered" evidence="2">
    <location>
        <begin position="1"/>
        <end position="30"/>
    </location>
</feature>
<feature type="compositionally biased region" description="Basic and acidic residues" evidence="2">
    <location>
        <begin position="1"/>
        <end position="12"/>
    </location>
</feature>
<proteinExistence type="inferred from homology"/>
<keyword id="KW-0143">Chaperone</keyword>
<keyword id="KW-0963">Cytoplasm</keyword>
<keyword id="KW-0346">Stress response</keyword>
<organism>
    <name type="scientific">Vibrio cholerae serotype O1 (strain M66-2)</name>
    <dbReference type="NCBI Taxonomy" id="579112"/>
    <lineage>
        <taxon>Bacteria</taxon>
        <taxon>Pseudomonadati</taxon>
        <taxon>Pseudomonadota</taxon>
        <taxon>Gammaproteobacteria</taxon>
        <taxon>Vibrionales</taxon>
        <taxon>Vibrionaceae</taxon>
        <taxon>Vibrio</taxon>
    </lineage>
</organism>
<comment type="function">
    <text evidence="1">Participates actively in the response to hyperosmotic and heat shock by preventing the aggregation of stress-denatured proteins, in association with DnaK and GrpE. It is the nucleotide exchange factor for DnaK and may function as a thermosensor. Unfolded proteins bind initially to DnaJ; upon interaction with the DnaJ-bound protein, DnaK hydrolyzes its bound ATP, resulting in the formation of a stable complex. GrpE releases ADP from DnaK; ATP binding to DnaK triggers the release of the substrate protein, thus completing the reaction cycle. Several rounds of ATP-dependent interactions between DnaJ, DnaK and GrpE are required for fully efficient folding.</text>
</comment>
<comment type="subunit">
    <text evidence="1">Homodimer.</text>
</comment>
<comment type="subcellular location">
    <subcellularLocation>
        <location evidence="1">Cytoplasm</location>
    </subcellularLocation>
</comment>
<comment type="similarity">
    <text evidence="1">Belongs to the GrpE family.</text>
</comment>
<accession>C3LTA4</accession>
<dbReference type="EMBL" id="CP001233">
    <property type="protein sequence ID" value="ACP05130.1"/>
    <property type="molecule type" value="Genomic_DNA"/>
</dbReference>
<dbReference type="RefSeq" id="WP_000064038.1">
    <property type="nucleotide sequence ID" value="NC_012578.1"/>
</dbReference>
<dbReference type="SMR" id="C3LTA4"/>
<dbReference type="GeneID" id="69720431"/>
<dbReference type="KEGG" id="vcm:VCM66_0811"/>
<dbReference type="HOGENOM" id="CLU_057217_6_0_6"/>
<dbReference type="Proteomes" id="UP000001217">
    <property type="component" value="Chromosome I"/>
</dbReference>
<dbReference type="GO" id="GO:0005829">
    <property type="term" value="C:cytosol"/>
    <property type="evidence" value="ECO:0007669"/>
    <property type="project" value="TreeGrafter"/>
</dbReference>
<dbReference type="GO" id="GO:0000774">
    <property type="term" value="F:adenyl-nucleotide exchange factor activity"/>
    <property type="evidence" value="ECO:0007669"/>
    <property type="project" value="InterPro"/>
</dbReference>
<dbReference type="GO" id="GO:0042803">
    <property type="term" value="F:protein homodimerization activity"/>
    <property type="evidence" value="ECO:0007669"/>
    <property type="project" value="InterPro"/>
</dbReference>
<dbReference type="GO" id="GO:0051087">
    <property type="term" value="F:protein-folding chaperone binding"/>
    <property type="evidence" value="ECO:0007669"/>
    <property type="project" value="InterPro"/>
</dbReference>
<dbReference type="GO" id="GO:0051082">
    <property type="term" value="F:unfolded protein binding"/>
    <property type="evidence" value="ECO:0007669"/>
    <property type="project" value="TreeGrafter"/>
</dbReference>
<dbReference type="GO" id="GO:0006457">
    <property type="term" value="P:protein folding"/>
    <property type="evidence" value="ECO:0007669"/>
    <property type="project" value="InterPro"/>
</dbReference>
<dbReference type="CDD" id="cd00446">
    <property type="entry name" value="GrpE"/>
    <property type="match status" value="1"/>
</dbReference>
<dbReference type="FunFam" id="2.30.22.10:FF:000001">
    <property type="entry name" value="Protein GrpE"/>
    <property type="match status" value="1"/>
</dbReference>
<dbReference type="FunFam" id="3.90.20.20:FF:000014">
    <property type="entry name" value="Protein GrpE"/>
    <property type="match status" value="1"/>
</dbReference>
<dbReference type="Gene3D" id="3.90.20.20">
    <property type="match status" value="1"/>
</dbReference>
<dbReference type="Gene3D" id="2.30.22.10">
    <property type="entry name" value="Head domain of nucleotide exchange factor GrpE"/>
    <property type="match status" value="1"/>
</dbReference>
<dbReference type="HAMAP" id="MF_01151">
    <property type="entry name" value="GrpE"/>
    <property type="match status" value="1"/>
</dbReference>
<dbReference type="InterPro" id="IPR000740">
    <property type="entry name" value="GrpE"/>
</dbReference>
<dbReference type="InterPro" id="IPR013805">
    <property type="entry name" value="GrpE_coiled_coil"/>
</dbReference>
<dbReference type="InterPro" id="IPR009012">
    <property type="entry name" value="GrpE_head"/>
</dbReference>
<dbReference type="NCBIfam" id="NF010737">
    <property type="entry name" value="PRK14139.1"/>
    <property type="match status" value="1"/>
</dbReference>
<dbReference type="NCBIfam" id="NF010738">
    <property type="entry name" value="PRK14140.1"/>
    <property type="match status" value="1"/>
</dbReference>
<dbReference type="NCBIfam" id="NF010748">
    <property type="entry name" value="PRK14150.1"/>
    <property type="match status" value="1"/>
</dbReference>
<dbReference type="PANTHER" id="PTHR21237">
    <property type="entry name" value="GRPE PROTEIN"/>
    <property type="match status" value="1"/>
</dbReference>
<dbReference type="PANTHER" id="PTHR21237:SF23">
    <property type="entry name" value="GRPE PROTEIN HOMOLOG, MITOCHONDRIAL"/>
    <property type="match status" value="1"/>
</dbReference>
<dbReference type="Pfam" id="PF01025">
    <property type="entry name" value="GrpE"/>
    <property type="match status" value="1"/>
</dbReference>
<dbReference type="PRINTS" id="PR00773">
    <property type="entry name" value="GRPEPROTEIN"/>
</dbReference>
<dbReference type="SUPFAM" id="SSF58014">
    <property type="entry name" value="Coiled-coil domain of nucleotide exchange factor GrpE"/>
    <property type="match status" value="1"/>
</dbReference>
<dbReference type="SUPFAM" id="SSF51064">
    <property type="entry name" value="Head domain of nucleotide exchange factor GrpE"/>
    <property type="match status" value="1"/>
</dbReference>
<dbReference type="PROSITE" id="PS01071">
    <property type="entry name" value="GRPE"/>
    <property type="match status" value="1"/>
</dbReference>
<protein>
    <recommendedName>
        <fullName evidence="1">Protein GrpE</fullName>
    </recommendedName>
    <alternativeName>
        <fullName evidence="1">HSP-70 cofactor</fullName>
    </alternativeName>
</protein>
<evidence type="ECO:0000255" key="1">
    <source>
        <dbReference type="HAMAP-Rule" id="MF_01151"/>
    </source>
</evidence>
<evidence type="ECO:0000256" key="2">
    <source>
        <dbReference type="SAM" id="MobiDB-lite"/>
    </source>
</evidence>
<name>GRPE_VIBCM</name>
<gene>
    <name evidence="1" type="primary">grpE</name>
    <name type="ordered locus">VCM66_0811</name>
</gene>